<reference key="1">
    <citation type="journal article" date="1999" name="Mol. Biol. Cell">
        <title>Replication factor C3 of Schizosaccharomyces pombe, a small subunit of replication factor C complex, plays a role in both replication and damage checkpoints.</title>
        <authorList>
            <person name="Shimada M."/>
            <person name="Okuzaki D."/>
            <person name="Tanaka S."/>
            <person name="Tougan T."/>
            <person name="Tamai K.K."/>
            <person name="Shimoda C."/>
            <person name="Nojima H."/>
        </authorList>
    </citation>
    <scope>NUCLEOTIDE SEQUENCE [GENOMIC DNA / MRNA]</scope>
    <scope>FUNCTION</scope>
    <scope>MUTAGENESIS OF ARG-216</scope>
</reference>
<reference key="2">
    <citation type="journal article" date="2000" name="Curr. Genet.">
        <title>The Schizosaccharomyces pombe rfc3+ gene encodes a homologue of the human hRFC36 and Saccharomyces cerevisiae Rfc3 subunits of replication factor C.</title>
        <authorList>
            <person name="Gray F.C."/>
            <person name="MacNeill S.A."/>
        </authorList>
    </citation>
    <scope>NUCLEOTIDE SEQUENCE [GENOMIC DNA]</scope>
</reference>
<reference key="3">
    <citation type="journal article" date="2002" name="Nature">
        <title>The genome sequence of Schizosaccharomyces pombe.</title>
        <authorList>
            <person name="Wood V."/>
            <person name="Gwilliam R."/>
            <person name="Rajandream M.A."/>
            <person name="Lyne M.H."/>
            <person name="Lyne R."/>
            <person name="Stewart A."/>
            <person name="Sgouros J.G."/>
            <person name="Peat N."/>
            <person name="Hayles J."/>
            <person name="Baker S.G."/>
            <person name="Basham D."/>
            <person name="Bowman S."/>
            <person name="Brooks K."/>
            <person name="Brown D."/>
            <person name="Brown S."/>
            <person name="Chillingworth T."/>
            <person name="Churcher C.M."/>
            <person name="Collins M."/>
            <person name="Connor R."/>
            <person name="Cronin A."/>
            <person name="Davis P."/>
            <person name="Feltwell T."/>
            <person name="Fraser A."/>
            <person name="Gentles S."/>
            <person name="Goble A."/>
            <person name="Hamlin N."/>
            <person name="Harris D.E."/>
            <person name="Hidalgo J."/>
            <person name="Hodgson G."/>
            <person name="Holroyd S."/>
            <person name="Hornsby T."/>
            <person name="Howarth S."/>
            <person name="Huckle E.J."/>
            <person name="Hunt S."/>
            <person name="Jagels K."/>
            <person name="James K.D."/>
            <person name="Jones L."/>
            <person name="Jones M."/>
            <person name="Leather S."/>
            <person name="McDonald S."/>
            <person name="McLean J."/>
            <person name="Mooney P."/>
            <person name="Moule S."/>
            <person name="Mungall K.L."/>
            <person name="Murphy L.D."/>
            <person name="Niblett D."/>
            <person name="Odell C."/>
            <person name="Oliver K."/>
            <person name="O'Neil S."/>
            <person name="Pearson D."/>
            <person name="Quail M.A."/>
            <person name="Rabbinowitsch E."/>
            <person name="Rutherford K.M."/>
            <person name="Rutter S."/>
            <person name="Saunders D."/>
            <person name="Seeger K."/>
            <person name="Sharp S."/>
            <person name="Skelton J."/>
            <person name="Simmonds M.N."/>
            <person name="Squares R."/>
            <person name="Squares S."/>
            <person name="Stevens K."/>
            <person name="Taylor K."/>
            <person name="Taylor R.G."/>
            <person name="Tivey A."/>
            <person name="Walsh S.V."/>
            <person name="Warren T."/>
            <person name="Whitehead S."/>
            <person name="Woodward J.R."/>
            <person name="Volckaert G."/>
            <person name="Aert R."/>
            <person name="Robben J."/>
            <person name="Grymonprez B."/>
            <person name="Weltjens I."/>
            <person name="Vanstreels E."/>
            <person name="Rieger M."/>
            <person name="Schaefer M."/>
            <person name="Mueller-Auer S."/>
            <person name="Gabel C."/>
            <person name="Fuchs M."/>
            <person name="Duesterhoeft A."/>
            <person name="Fritzc C."/>
            <person name="Holzer E."/>
            <person name="Moestl D."/>
            <person name="Hilbert H."/>
            <person name="Borzym K."/>
            <person name="Langer I."/>
            <person name="Beck A."/>
            <person name="Lehrach H."/>
            <person name="Reinhardt R."/>
            <person name="Pohl T.M."/>
            <person name="Eger P."/>
            <person name="Zimmermann W."/>
            <person name="Wedler H."/>
            <person name="Wambutt R."/>
            <person name="Purnelle B."/>
            <person name="Goffeau A."/>
            <person name="Cadieu E."/>
            <person name="Dreano S."/>
            <person name="Gloux S."/>
            <person name="Lelaure V."/>
            <person name="Mottier S."/>
            <person name="Galibert F."/>
            <person name="Aves S.J."/>
            <person name="Xiang Z."/>
            <person name="Hunt C."/>
            <person name="Moore K."/>
            <person name="Hurst S.M."/>
            <person name="Lucas M."/>
            <person name="Rochet M."/>
            <person name="Gaillardin C."/>
            <person name="Tallada V.A."/>
            <person name="Garzon A."/>
            <person name="Thode G."/>
            <person name="Daga R.R."/>
            <person name="Cruzado L."/>
            <person name="Jimenez J."/>
            <person name="Sanchez M."/>
            <person name="del Rey F."/>
            <person name="Benito J."/>
            <person name="Dominguez A."/>
            <person name="Revuelta J.L."/>
            <person name="Moreno S."/>
            <person name="Armstrong J."/>
            <person name="Forsburg S.L."/>
            <person name="Cerutti L."/>
            <person name="Lowe T."/>
            <person name="McCombie W.R."/>
            <person name="Paulsen I."/>
            <person name="Potashkin J."/>
            <person name="Shpakovski G.V."/>
            <person name="Ussery D."/>
            <person name="Barrell B.G."/>
            <person name="Nurse P."/>
        </authorList>
    </citation>
    <scope>NUCLEOTIDE SEQUENCE [LARGE SCALE GENOMIC DNA]</scope>
    <source>
        <strain>972 / ATCC 24843</strain>
    </source>
</reference>
<reference key="4">
    <citation type="journal article" date="2005" name="Nucleic Acids Res.">
        <title>Contrasting effects of Elg1-RFC and Ctf18-RFC inactivation in the absence of fully functional RFC in fission yeast.</title>
        <authorList>
            <person name="Kim J."/>
            <person name="Robertson K."/>
            <person name="Mylonas K.J.L."/>
            <person name="Gray F.C."/>
            <person name="Charapitsa I."/>
            <person name="MacNeill S.A."/>
        </authorList>
    </citation>
    <scope>PROTEIN SEQUENCE OF 10-41; 56-69; 79-98; 115-141; 163-170; 176-204; 255-272 AND 301-332</scope>
    <scope>FUNCTION</scope>
    <scope>SUBUNIT</scope>
</reference>
<accession>O14003</accession>
<accession>Q9P547</accession>
<proteinExistence type="evidence at protein level"/>
<evidence type="ECO:0000250" key="1"/>
<evidence type="ECO:0000255" key="2"/>
<evidence type="ECO:0000269" key="3">
    <source>
    </source>
</evidence>
<evidence type="ECO:0000269" key="4">
    <source>
    </source>
</evidence>
<evidence type="ECO:0000305" key="5"/>
<gene>
    <name type="primary">rfc3</name>
    <name type="ORF">SPAC27E2.10c</name>
    <name type="ORF">SPAPJ698.01c</name>
</gene>
<protein>
    <recommendedName>
        <fullName>Replication factor C subunit 3</fullName>
        <shortName>Replication factor C3</shortName>
    </recommendedName>
</protein>
<sequence length="342" mass="38440">MSIEKGKGRAMDIDLPLGSESTLPWVEKYRPANLEDVVSHKDIISTLEKFISSNRVPHMLFYGPPGTGKTSTILACARKIYGPNYRNQLMELNASDDRGIDAVREQIKNFASTRQIFASTFKMIILDEADAMTLAAQNALRRVIEKYTKNVRFCIICNYINKISPAIQSRCTRFRFQPLPPKEIEKTVDHVIQSEHCNIDPDAKMAVLRLSKGDMRKALNILQACHAAYDHIDVSAIYNCVGHPHPSDIDYFLKSIMNDEFVIAFNTISSIKQQKGLALQDILTCIFEALDELEIKPNAKIFILDQLATIEHRMSFGCSEKIQLSAMIASIKTGVDLAAKVN</sequence>
<dbReference type="EMBL" id="AB017039">
    <property type="protein sequence ID" value="BAA82745.1"/>
    <property type="molecule type" value="Genomic_DNA"/>
</dbReference>
<dbReference type="EMBL" id="AB017040">
    <property type="protein sequence ID" value="BAA82746.1"/>
    <property type="molecule type" value="mRNA"/>
</dbReference>
<dbReference type="EMBL" id="AJ012839">
    <property type="protein sequence ID" value="CAB38106.1"/>
    <property type="molecule type" value="Genomic_DNA"/>
</dbReference>
<dbReference type="EMBL" id="CU329670">
    <property type="protein sequence ID" value="CAB39134.2"/>
    <property type="molecule type" value="Genomic_DNA"/>
</dbReference>
<dbReference type="PIR" id="T43410">
    <property type="entry name" value="T43410"/>
</dbReference>
<dbReference type="RefSeq" id="XP_001713099.1">
    <property type="nucleotide sequence ID" value="XM_001713047.2"/>
</dbReference>
<dbReference type="SMR" id="O14003"/>
<dbReference type="BioGRID" id="277995">
    <property type="interactions" value="9"/>
</dbReference>
<dbReference type="ComplexPortal" id="CPX-546">
    <property type="entry name" value="DNA replication factor C complex"/>
</dbReference>
<dbReference type="FunCoup" id="O14003">
    <property type="interactions" value="727"/>
</dbReference>
<dbReference type="STRING" id="284812.O14003"/>
<dbReference type="PaxDb" id="4896-SPAC27E2.10c.1"/>
<dbReference type="EnsemblFungi" id="SPAC27E2.10c.1">
    <property type="protein sequence ID" value="SPAC27E2.10c.1:pep"/>
    <property type="gene ID" value="SPAC27E2.10c"/>
</dbReference>
<dbReference type="PomBase" id="SPAC27E2.10c">
    <property type="gene designation" value="rfc3"/>
</dbReference>
<dbReference type="VEuPathDB" id="FungiDB:SPAC27E2.10c"/>
<dbReference type="eggNOG" id="KOG0990">
    <property type="taxonomic scope" value="Eukaryota"/>
</dbReference>
<dbReference type="HOGENOM" id="CLU_042324_2_1_1"/>
<dbReference type="InParanoid" id="O14003"/>
<dbReference type="OMA" id="AEDNLPW"/>
<dbReference type="PhylomeDB" id="O14003"/>
<dbReference type="Reactome" id="R-SPO-110312">
    <property type="pathway name" value="Translesion synthesis by REV1"/>
</dbReference>
<dbReference type="Reactome" id="R-SPO-110314">
    <property type="pathway name" value="Recognition of DNA damage by PCNA-containing replication complex"/>
</dbReference>
<dbReference type="Reactome" id="R-SPO-110320">
    <property type="pathway name" value="Translesion Synthesis by POLH"/>
</dbReference>
<dbReference type="Reactome" id="R-SPO-176187">
    <property type="pathway name" value="Activation of ATR in response to replication stress"/>
</dbReference>
<dbReference type="Reactome" id="R-SPO-5651801">
    <property type="pathway name" value="PCNA-Dependent Long Patch Base Excision Repair"/>
</dbReference>
<dbReference type="Reactome" id="R-SPO-5655862">
    <property type="pathway name" value="Translesion synthesis by POLK"/>
</dbReference>
<dbReference type="Reactome" id="R-SPO-5656121">
    <property type="pathway name" value="Translesion synthesis by POLI"/>
</dbReference>
<dbReference type="Reactome" id="R-SPO-5656169">
    <property type="pathway name" value="Termination of translesion DNA synthesis"/>
</dbReference>
<dbReference type="Reactome" id="R-SPO-5696397">
    <property type="pathway name" value="Gap-filling DNA repair synthesis and ligation in GG-NER"/>
</dbReference>
<dbReference type="Reactome" id="R-SPO-5696400">
    <property type="pathway name" value="Dual Incision in GG-NER"/>
</dbReference>
<dbReference type="Reactome" id="R-SPO-6782135">
    <property type="pathway name" value="Dual incision in TC-NER"/>
</dbReference>
<dbReference type="Reactome" id="R-SPO-6782210">
    <property type="pathway name" value="Gap-filling DNA repair synthesis and ligation in TC-NER"/>
</dbReference>
<dbReference type="Reactome" id="R-SPO-69091">
    <property type="pathway name" value="Polymerase switching"/>
</dbReference>
<dbReference type="PRO" id="PR:O14003"/>
<dbReference type="Proteomes" id="UP000002485">
    <property type="component" value="Chromosome I"/>
</dbReference>
<dbReference type="GO" id="GO:0000785">
    <property type="term" value="C:chromatin"/>
    <property type="evidence" value="ECO:0000305"/>
    <property type="project" value="PomBase"/>
</dbReference>
<dbReference type="GO" id="GO:0031390">
    <property type="term" value="C:Ctf18 RFC-like complex"/>
    <property type="evidence" value="ECO:0000318"/>
    <property type="project" value="GO_Central"/>
</dbReference>
<dbReference type="GO" id="GO:0005829">
    <property type="term" value="C:cytosol"/>
    <property type="evidence" value="ECO:0007005"/>
    <property type="project" value="PomBase"/>
</dbReference>
<dbReference type="GO" id="GO:0005663">
    <property type="term" value="C:DNA replication factor C complex"/>
    <property type="evidence" value="ECO:0000318"/>
    <property type="project" value="GO_Central"/>
</dbReference>
<dbReference type="GO" id="GO:0031391">
    <property type="term" value="C:Elg1 RFC-like complex"/>
    <property type="evidence" value="ECO:0000314"/>
    <property type="project" value="PomBase"/>
</dbReference>
<dbReference type="GO" id="GO:0005634">
    <property type="term" value="C:nucleus"/>
    <property type="evidence" value="ECO:0007005"/>
    <property type="project" value="PomBase"/>
</dbReference>
<dbReference type="GO" id="GO:0031389">
    <property type="term" value="C:Rad17 RFC-like complex"/>
    <property type="evidence" value="ECO:0000318"/>
    <property type="project" value="GO_Central"/>
</dbReference>
<dbReference type="GO" id="GO:0005524">
    <property type="term" value="F:ATP binding"/>
    <property type="evidence" value="ECO:0000255"/>
    <property type="project" value="PomBase"/>
</dbReference>
<dbReference type="GO" id="GO:0016887">
    <property type="term" value="F:ATP hydrolysis activity"/>
    <property type="evidence" value="ECO:0000303"/>
    <property type="project" value="PomBase"/>
</dbReference>
<dbReference type="GO" id="GO:0003677">
    <property type="term" value="F:DNA binding"/>
    <property type="evidence" value="ECO:0007669"/>
    <property type="project" value="InterPro"/>
</dbReference>
<dbReference type="GO" id="GO:0061860">
    <property type="term" value="F:DNA clamp unloader activity"/>
    <property type="evidence" value="ECO:0000305"/>
    <property type="project" value="PomBase"/>
</dbReference>
<dbReference type="GO" id="GO:0006281">
    <property type="term" value="P:DNA repair"/>
    <property type="evidence" value="ECO:0000318"/>
    <property type="project" value="GO_Central"/>
</dbReference>
<dbReference type="GO" id="GO:1902983">
    <property type="term" value="P:DNA strand elongation involved in mitotic DNA replication"/>
    <property type="evidence" value="ECO:0000314"/>
    <property type="project" value="PomBase"/>
</dbReference>
<dbReference type="GO" id="GO:0006261">
    <property type="term" value="P:DNA-templated DNA replication"/>
    <property type="evidence" value="ECO:0000318"/>
    <property type="project" value="GO_Central"/>
</dbReference>
<dbReference type="GO" id="GO:1903460">
    <property type="term" value="P:mitotic DNA replication leading strand elongation"/>
    <property type="evidence" value="ECO:0000266"/>
    <property type="project" value="PomBase"/>
</dbReference>
<dbReference type="GO" id="GO:0070914">
    <property type="term" value="P:UV-damage excision repair"/>
    <property type="evidence" value="ECO:0000314"/>
    <property type="project" value="PomBase"/>
</dbReference>
<dbReference type="CDD" id="cd00009">
    <property type="entry name" value="AAA"/>
    <property type="match status" value="1"/>
</dbReference>
<dbReference type="CDD" id="cd18140">
    <property type="entry name" value="HLD_clamp_RFC"/>
    <property type="match status" value="1"/>
</dbReference>
<dbReference type="FunFam" id="1.10.8.60:FF:000028">
    <property type="entry name" value="Replication factor C subunit 5"/>
    <property type="match status" value="1"/>
</dbReference>
<dbReference type="FunFam" id="1.20.272.10:FF:000004">
    <property type="entry name" value="Replication factor C subunit 5"/>
    <property type="match status" value="1"/>
</dbReference>
<dbReference type="FunFam" id="3.40.50.300:FF:000129">
    <property type="entry name" value="Replication factor C subunit 5"/>
    <property type="match status" value="1"/>
</dbReference>
<dbReference type="Gene3D" id="1.10.8.60">
    <property type="match status" value="1"/>
</dbReference>
<dbReference type="Gene3D" id="1.20.272.10">
    <property type="match status" value="1"/>
</dbReference>
<dbReference type="Gene3D" id="3.40.50.300">
    <property type="entry name" value="P-loop containing nucleotide triphosphate hydrolases"/>
    <property type="match status" value="1"/>
</dbReference>
<dbReference type="InterPro" id="IPR003593">
    <property type="entry name" value="AAA+_ATPase"/>
</dbReference>
<dbReference type="InterPro" id="IPR003959">
    <property type="entry name" value="ATPase_AAA_core"/>
</dbReference>
<dbReference type="InterPro" id="IPR008921">
    <property type="entry name" value="DNA_pol3_clamp-load_cplx_C"/>
</dbReference>
<dbReference type="InterPro" id="IPR050238">
    <property type="entry name" value="DNA_Rep/Repair_Clamp_Loader"/>
</dbReference>
<dbReference type="InterPro" id="IPR027417">
    <property type="entry name" value="P-loop_NTPase"/>
</dbReference>
<dbReference type="InterPro" id="IPR013748">
    <property type="entry name" value="Rep_factorC_C"/>
</dbReference>
<dbReference type="InterPro" id="IPR047854">
    <property type="entry name" value="RFC_lid"/>
</dbReference>
<dbReference type="NCBIfam" id="NF001679">
    <property type="entry name" value="PRK00440.1"/>
    <property type="match status" value="1"/>
</dbReference>
<dbReference type="PANTHER" id="PTHR11669">
    <property type="entry name" value="REPLICATION FACTOR C / DNA POLYMERASE III GAMMA-TAU SUBUNIT"/>
    <property type="match status" value="1"/>
</dbReference>
<dbReference type="PANTHER" id="PTHR11669:SF9">
    <property type="entry name" value="REPLICATION FACTOR C SUBUNIT 5"/>
    <property type="match status" value="1"/>
</dbReference>
<dbReference type="Pfam" id="PF00004">
    <property type="entry name" value="AAA"/>
    <property type="match status" value="1"/>
</dbReference>
<dbReference type="Pfam" id="PF08542">
    <property type="entry name" value="Rep_fac_C"/>
    <property type="match status" value="1"/>
</dbReference>
<dbReference type="SMART" id="SM00382">
    <property type="entry name" value="AAA"/>
    <property type="match status" value="1"/>
</dbReference>
<dbReference type="SUPFAM" id="SSF52540">
    <property type="entry name" value="P-loop containing nucleoside triphosphate hydrolases"/>
    <property type="match status" value="1"/>
</dbReference>
<dbReference type="SUPFAM" id="SSF48019">
    <property type="entry name" value="post-AAA+ oligomerization domain-like"/>
    <property type="match status" value="1"/>
</dbReference>
<comment type="function">
    <text evidence="3 4">The elongation of primed DNA templates by DNA polymerase delta and epsilon requires the action of the accessory proteins PCNA and activator 1. Subunit 3 binds ATP. Also involved in replication and DNA damage checkpoint controls, probably functioning as a checkpoint sensor.</text>
</comment>
<comment type="subunit">
    <text evidence="4">Heteropentamer of subunits rfc1, rfc2, rfc3, rfc4 and rfc5 that forms a complex (RFC) with PCNA in the presence of ATP. Two other complexes exist where rfc1 can be replaced by either ctf18 or elg1 to form the ctf18-RFC or the elg1-RFC complexes respectively.</text>
</comment>
<comment type="subcellular location">
    <subcellularLocation>
        <location evidence="1">Nucleus</location>
    </subcellularLocation>
</comment>
<comment type="similarity">
    <text evidence="5">Belongs to the activator 1 small subunits family.</text>
</comment>
<keyword id="KW-0067">ATP-binding</keyword>
<keyword id="KW-0903">Direct protein sequencing</keyword>
<keyword id="KW-0227">DNA damage</keyword>
<keyword id="KW-0235">DNA replication</keyword>
<keyword id="KW-0547">Nucleotide-binding</keyword>
<keyword id="KW-0539">Nucleus</keyword>
<keyword id="KW-1185">Reference proteome</keyword>
<organism>
    <name type="scientific">Schizosaccharomyces pombe (strain 972 / ATCC 24843)</name>
    <name type="common">Fission yeast</name>
    <dbReference type="NCBI Taxonomy" id="284812"/>
    <lineage>
        <taxon>Eukaryota</taxon>
        <taxon>Fungi</taxon>
        <taxon>Dikarya</taxon>
        <taxon>Ascomycota</taxon>
        <taxon>Taphrinomycotina</taxon>
        <taxon>Schizosaccharomycetes</taxon>
        <taxon>Schizosaccharomycetales</taxon>
        <taxon>Schizosaccharomycetaceae</taxon>
        <taxon>Schizosaccharomyces</taxon>
    </lineage>
</organism>
<feature type="chain" id="PRO_0000121755" description="Replication factor C subunit 3">
    <location>
        <begin position="1"/>
        <end position="342"/>
    </location>
</feature>
<feature type="binding site" evidence="2">
    <location>
        <begin position="63"/>
        <end position="70"/>
    </location>
    <ligand>
        <name>ATP</name>
        <dbReference type="ChEBI" id="CHEBI:30616"/>
    </ligand>
</feature>
<feature type="mutagenesis site" description="Defective DNA replication." evidence="3">
    <original>R</original>
    <variation>W</variation>
    <location>
        <position position="216"/>
    </location>
</feature>
<name>RFC3_SCHPO</name>